<proteinExistence type="evidence at protein level"/>
<dbReference type="EMBL" id="AJ277527">
    <property type="protein sequence ID" value="CAC16589.1"/>
    <property type="molecule type" value="mRNA"/>
</dbReference>
<dbReference type="EMBL" id="AF346619">
    <property type="protein sequence ID" value="AAL07564.1"/>
    <property type="molecule type" value="mRNA"/>
</dbReference>
<dbReference type="EMBL" id="AK302586">
    <property type="protein sequence ID" value="BAG63839.1"/>
    <property type="molecule type" value="mRNA"/>
</dbReference>
<dbReference type="EMBL" id="Z75746">
    <property type="status" value="NOT_ANNOTATED_CDS"/>
    <property type="molecule type" value="Genomic_DNA"/>
</dbReference>
<dbReference type="EMBL" id="CH471190">
    <property type="protein sequence ID" value="EAW54722.1"/>
    <property type="molecule type" value="Genomic_DNA"/>
</dbReference>
<dbReference type="EMBL" id="BC031616">
    <property type="protein sequence ID" value="AAH31616.1"/>
    <property type="molecule type" value="mRNA"/>
</dbReference>
<dbReference type="EMBL" id="AJ277660">
    <property type="protein sequence ID" value="CAC20434.1"/>
    <property type="status" value="ALT_FRAME"/>
    <property type="molecule type" value="mRNA"/>
</dbReference>
<dbReference type="CCDS" id="CCDS14503.1">
    <molecule id="Q9H4D5-1"/>
</dbReference>
<dbReference type="RefSeq" id="NP_071335.1">
    <molecule id="Q9H4D5-1"/>
    <property type="nucleotide sequence ID" value="NM_022052.2"/>
</dbReference>
<dbReference type="SMR" id="Q9H4D5"/>
<dbReference type="BioGRID" id="121025">
    <property type="interactions" value="8"/>
</dbReference>
<dbReference type="ComplexPortal" id="CPX-2436">
    <property type="entry name" value="NXF3-NXT1 mRNA nuclear export factor complex"/>
</dbReference>
<dbReference type="ComplexPortal" id="CPX-2612">
    <property type="entry name" value="NXF3-NXT2 mRNA nuclear export factor complex"/>
</dbReference>
<dbReference type="FunCoup" id="Q9H4D5">
    <property type="interactions" value="810"/>
</dbReference>
<dbReference type="IntAct" id="Q9H4D5">
    <property type="interactions" value="4"/>
</dbReference>
<dbReference type="MINT" id="Q9H4D5"/>
<dbReference type="STRING" id="9606.ENSP00000378504"/>
<dbReference type="iPTMnet" id="Q9H4D5"/>
<dbReference type="PhosphoSitePlus" id="Q9H4D5"/>
<dbReference type="BioMuta" id="NXF3"/>
<dbReference type="DMDM" id="20455187"/>
<dbReference type="jPOST" id="Q9H4D5"/>
<dbReference type="MassIVE" id="Q9H4D5"/>
<dbReference type="PaxDb" id="9606-ENSP00000378504"/>
<dbReference type="PeptideAtlas" id="Q9H4D5"/>
<dbReference type="ProteomicsDB" id="80824">
    <molecule id="Q9H4D5-1"/>
</dbReference>
<dbReference type="Antibodypedia" id="526">
    <property type="antibodies" value="181 antibodies from 31 providers"/>
</dbReference>
<dbReference type="DNASU" id="56000"/>
<dbReference type="Ensembl" id="ENST00000395065.8">
    <molecule id="Q9H4D5-1"/>
    <property type="protein sequence ID" value="ENSP00000378504.3"/>
    <property type="gene ID" value="ENSG00000147206.17"/>
</dbReference>
<dbReference type="GeneID" id="56000"/>
<dbReference type="KEGG" id="hsa:56000"/>
<dbReference type="MANE-Select" id="ENST00000395065.8">
    <property type="protein sequence ID" value="ENSP00000378504.3"/>
    <property type="RefSeq nucleotide sequence ID" value="NM_022052.2"/>
    <property type="RefSeq protein sequence ID" value="NP_071335.1"/>
</dbReference>
<dbReference type="UCSC" id="uc004eju.5">
    <molecule id="Q9H4D5-1"/>
    <property type="organism name" value="human"/>
</dbReference>
<dbReference type="AGR" id="HGNC:8073"/>
<dbReference type="CTD" id="56000"/>
<dbReference type="DisGeNET" id="56000"/>
<dbReference type="GeneCards" id="NXF3"/>
<dbReference type="HGNC" id="HGNC:8073">
    <property type="gene designation" value="NXF3"/>
</dbReference>
<dbReference type="HPA" id="ENSG00000147206">
    <property type="expression patterns" value="Tissue enhanced (fallopian tube, testis)"/>
</dbReference>
<dbReference type="MalaCards" id="NXF3"/>
<dbReference type="MIM" id="300316">
    <property type="type" value="gene"/>
</dbReference>
<dbReference type="neXtProt" id="NX_Q9H4D5"/>
<dbReference type="OpenTargets" id="ENSG00000147206"/>
<dbReference type="PharmGKB" id="PA31860"/>
<dbReference type="VEuPathDB" id="HostDB:ENSG00000147206"/>
<dbReference type="eggNOG" id="KOG3763">
    <property type="taxonomic scope" value="Eukaryota"/>
</dbReference>
<dbReference type="GeneTree" id="ENSGT00390000007539"/>
<dbReference type="HOGENOM" id="CLU_011280_2_1_1"/>
<dbReference type="InParanoid" id="Q9H4D5"/>
<dbReference type="OMA" id="MQAHFFV"/>
<dbReference type="OrthoDB" id="25872at2759"/>
<dbReference type="PAN-GO" id="Q9H4D5">
    <property type="GO annotations" value="3 GO annotations based on evolutionary models"/>
</dbReference>
<dbReference type="PhylomeDB" id="Q9H4D5"/>
<dbReference type="TreeFam" id="TF314566"/>
<dbReference type="PathwayCommons" id="Q9H4D5"/>
<dbReference type="SignaLink" id="Q9H4D5"/>
<dbReference type="BioGRID-ORCS" id="56000">
    <property type="hits" value="18 hits in 773 CRISPR screens"/>
</dbReference>
<dbReference type="ChiTaRS" id="NXF3">
    <property type="organism name" value="human"/>
</dbReference>
<dbReference type="GenomeRNAi" id="56000"/>
<dbReference type="Pharos" id="Q9H4D5">
    <property type="development level" value="Tbio"/>
</dbReference>
<dbReference type="PRO" id="PR:Q9H4D5"/>
<dbReference type="Proteomes" id="UP000005640">
    <property type="component" value="Chromosome X"/>
</dbReference>
<dbReference type="RNAct" id="Q9H4D5">
    <property type="molecule type" value="protein"/>
</dbReference>
<dbReference type="Bgee" id="ENSG00000147206">
    <property type="expression patterns" value="Expressed in right uterine tube and 108 other cell types or tissues"/>
</dbReference>
<dbReference type="ExpressionAtlas" id="Q9H4D5">
    <property type="expression patterns" value="baseline and differential"/>
</dbReference>
<dbReference type="GO" id="GO:0005737">
    <property type="term" value="C:cytoplasm"/>
    <property type="evidence" value="ECO:0000314"/>
    <property type="project" value="UniProtKB"/>
</dbReference>
<dbReference type="GO" id="GO:0042272">
    <property type="term" value="C:nuclear RNA export factor complex"/>
    <property type="evidence" value="ECO:0000314"/>
    <property type="project" value="UniProtKB"/>
</dbReference>
<dbReference type="GO" id="GO:0005654">
    <property type="term" value="C:nucleoplasm"/>
    <property type="evidence" value="ECO:0000314"/>
    <property type="project" value="HPA"/>
</dbReference>
<dbReference type="GO" id="GO:0005634">
    <property type="term" value="C:nucleus"/>
    <property type="evidence" value="ECO:0000314"/>
    <property type="project" value="UniProtKB"/>
</dbReference>
<dbReference type="GO" id="GO:0003723">
    <property type="term" value="F:RNA binding"/>
    <property type="evidence" value="ECO:0000318"/>
    <property type="project" value="GO_Central"/>
</dbReference>
<dbReference type="GO" id="GO:0006406">
    <property type="term" value="P:mRNA export from nucleus"/>
    <property type="evidence" value="ECO:0000314"/>
    <property type="project" value="UniProtKB"/>
</dbReference>
<dbReference type="GO" id="GO:0016973">
    <property type="term" value="P:poly(A)+ mRNA export from nucleus"/>
    <property type="evidence" value="ECO:0000318"/>
    <property type="project" value="GO_Central"/>
</dbReference>
<dbReference type="CDD" id="cd00780">
    <property type="entry name" value="NTF2"/>
    <property type="match status" value="1"/>
</dbReference>
<dbReference type="FunFam" id="3.10.450.50:FF:000004">
    <property type="entry name" value="Nuclear RNA export factor 1"/>
    <property type="match status" value="1"/>
</dbReference>
<dbReference type="FunFam" id="3.30.70.330:FF:000165">
    <property type="entry name" value="nuclear RNA export factor 1"/>
    <property type="match status" value="1"/>
</dbReference>
<dbReference type="FunFam" id="3.80.10.10:FF:000414">
    <property type="entry name" value="Nuclear RNA export factor 3"/>
    <property type="match status" value="1"/>
</dbReference>
<dbReference type="Gene3D" id="3.10.450.50">
    <property type="match status" value="1"/>
</dbReference>
<dbReference type="Gene3D" id="3.30.70.330">
    <property type="match status" value="1"/>
</dbReference>
<dbReference type="Gene3D" id="3.80.10.10">
    <property type="entry name" value="Ribonuclease Inhibitor"/>
    <property type="match status" value="1"/>
</dbReference>
<dbReference type="InterPro" id="IPR032675">
    <property type="entry name" value="LRR_dom_sf"/>
</dbReference>
<dbReference type="InterPro" id="IPR032710">
    <property type="entry name" value="NTF2-like_dom_sf"/>
</dbReference>
<dbReference type="InterPro" id="IPR002075">
    <property type="entry name" value="NTF2_dom"/>
</dbReference>
<dbReference type="InterPro" id="IPR018222">
    <property type="entry name" value="Nuclear_transport_factor_2_euk"/>
</dbReference>
<dbReference type="InterPro" id="IPR012677">
    <property type="entry name" value="Nucleotide-bd_a/b_plait_sf"/>
</dbReference>
<dbReference type="InterPro" id="IPR030217">
    <property type="entry name" value="NXF_fam"/>
</dbReference>
<dbReference type="InterPro" id="IPR035979">
    <property type="entry name" value="RBD_domain_sf"/>
</dbReference>
<dbReference type="InterPro" id="IPR015245">
    <property type="entry name" value="Tap_RNA-bd"/>
</dbReference>
<dbReference type="PANTHER" id="PTHR10662">
    <property type="entry name" value="NUCLEAR RNA EXPORT FACTOR"/>
    <property type="match status" value="1"/>
</dbReference>
<dbReference type="PANTHER" id="PTHR10662:SF12">
    <property type="entry name" value="NUCLEAR RNA EXPORT FACTOR 3"/>
    <property type="match status" value="1"/>
</dbReference>
<dbReference type="Pfam" id="PF24048">
    <property type="entry name" value="LRR_NXF1-5"/>
    <property type="match status" value="1"/>
</dbReference>
<dbReference type="Pfam" id="PF22602">
    <property type="entry name" value="NXF_NTF2"/>
    <property type="match status" value="1"/>
</dbReference>
<dbReference type="Pfam" id="PF09162">
    <property type="entry name" value="Tap-RNA_bind"/>
    <property type="match status" value="1"/>
</dbReference>
<dbReference type="SUPFAM" id="SSF54427">
    <property type="entry name" value="NTF2-like"/>
    <property type="match status" value="1"/>
</dbReference>
<dbReference type="SUPFAM" id="SSF54928">
    <property type="entry name" value="RNA-binding domain, RBD"/>
    <property type="match status" value="1"/>
</dbReference>
<dbReference type="PROSITE" id="PS50177">
    <property type="entry name" value="NTF2_DOMAIN"/>
    <property type="match status" value="1"/>
</dbReference>
<sequence length="531" mass="60102">MSLPSGHTTGHTDQVVQRRARCWDIYQRRFSSRSEPVNPGMHSSSHQQQDGDAAMHGAHMDSPVRYTPYTISPYNRKGSFRKQDQTHVNMEREQKPPERRMEGNMPDGTLGSWFKITVPFGIKYNEKWLLNLIQNECSVPFVPVEFHYENMHASFFVENASIAYALKNVSGKIWDEDNEKISIFVNPAGIPHFVHRELKSEKVEQIKLAMNQQCDVSQEALDIQRLPFYPDMVNRDTKMASNPRKCMAASLDVHEENIPTVMSAGEMDKWKGIEPGEKCADRSPVCTTFSDTSSNINSILELFPKLLCLDGQQSPRATLCGTEAHKRLPTCKGSFFGSEMLKNLVLQFLQQYYLIYDSGDRQGLLSAYHDEACFSLSIPFNPEDSAPSSFCKFFKDSRNIKILKDPYLRGELLKHTKLDIVDSLSALPKTQHDLSSFLVDMWYQTEWMLCFSVNGVFKEVEGQSQGSVLAFTRTFIATPGSSSSLCIVNDKLFVRDTSHQGTQSALFTLVPTAFSSSVPAFSQEQQKMLPS</sequence>
<feature type="chain" id="PRO_0000220534" description="Nuclear RNA export factor 3">
    <location>
        <begin position="1"/>
        <end position="531"/>
    </location>
</feature>
<feature type="domain" description="RRM">
    <location>
        <begin position="113"/>
        <end position="192"/>
    </location>
</feature>
<feature type="domain" description="NTF2" evidence="1">
    <location>
        <begin position="344"/>
        <end position="494"/>
    </location>
</feature>
<feature type="region of interest" description="Disordered" evidence="2">
    <location>
        <begin position="33"/>
        <end position="59"/>
    </location>
</feature>
<feature type="region of interest" description="Disordered" evidence="2">
    <location>
        <begin position="83"/>
        <end position="106"/>
    </location>
</feature>
<feature type="compositionally biased region" description="Polar residues" evidence="2">
    <location>
        <begin position="41"/>
        <end position="50"/>
    </location>
</feature>
<feature type="compositionally biased region" description="Basic and acidic residues" evidence="2">
    <location>
        <begin position="83"/>
        <end position="102"/>
    </location>
</feature>
<feature type="splice variant" id="VSP_057068" description="In isoform 2." evidence="4">
    <location>
        <begin position="1"/>
        <end position="89"/>
    </location>
</feature>
<feature type="splice variant" id="VSP_057069" description="In isoform 2." evidence="4">
    <original>NSILELFPKLLCLDGQQSPRATLCGT</original>
    <variation>KSVVPSVTTWDPDLCLIAPFCRRRQH</variation>
    <location>
        <begin position="297"/>
        <end position="322"/>
    </location>
</feature>
<feature type="splice variant" id="VSP_057070" description="In isoform 2." evidence="4">
    <location>
        <begin position="323"/>
        <end position="531"/>
    </location>
</feature>
<feature type="sequence variant" id="VAR_050419" description="In dbSNP:rs2301387.">
    <original>N</original>
    <variation>I</variation>
    <location>
        <position position="186"/>
    </location>
</feature>
<feature type="mutagenesis site" description="Inactivates CRM1 binding; when associated with R-302." evidence="3">
    <original>L</original>
    <variation>R</variation>
    <location>
        <position position="300"/>
    </location>
</feature>
<feature type="mutagenesis site" description="Inactivates CRM1 binding; when associated with R-300." evidence="3">
    <original>L</original>
    <variation>R</variation>
    <location>
        <position position="302"/>
    </location>
</feature>
<organism>
    <name type="scientific">Homo sapiens</name>
    <name type="common">Human</name>
    <dbReference type="NCBI Taxonomy" id="9606"/>
    <lineage>
        <taxon>Eukaryota</taxon>
        <taxon>Metazoa</taxon>
        <taxon>Chordata</taxon>
        <taxon>Craniata</taxon>
        <taxon>Vertebrata</taxon>
        <taxon>Euteleostomi</taxon>
        <taxon>Mammalia</taxon>
        <taxon>Eutheria</taxon>
        <taxon>Euarchontoglires</taxon>
        <taxon>Primates</taxon>
        <taxon>Haplorrhini</taxon>
        <taxon>Catarrhini</taxon>
        <taxon>Hominidae</taxon>
        <taxon>Homo</taxon>
    </lineage>
</organism>
<comment type="function">
    <text>May function as a tissue-specific nuclear mRNA export factor.</text>
</comment>
<comment type="subunit">
    <text>Interacts with NXT1, NXT2, E1B-AP5 and CRM1 nuclear export factor.</text>
</comment>
<comment type="interaction">
    <interactant intactId="EBI-750038">
        <id>Q9H4D5</id>
    </interactant>
    <interactant intactId="EBI-301889">
        <id>Q9UKK6</id>
        <label>NXT1</label>
    </interactant>
    <organismsDiffer>false</organismsDiffer>
    <experiments>17</experiments>
</comment>
<comment type="interaction">
    <interactant intactId="EBI-750038">
        <id>Q9H4D5</id>
    </interactant>
    <interactant intactId="EBI-752122">
        <id>Q9NPJ8</id>
        <label>NXT2</label>
    </interactant>
    <organismsDiffer>false</organismsDiffer>
    <experiments>9</experiments>
</comment>
<comment type="interaction">
    <interactant intactId="EBI-750038">
        <id>Q9H4D5</id>
    </interactant>
    <interactant intactId="EBI-10698339">
        <id>Q9NPJ8-3</id>
        <label>NXT2</label>
    </interactant>
    <organismsDiffer>false</organismsDiffer>
    <experiments>9</experiments>
</comment>
<comment type="interaction">
    <interactant intactId="EBI-750038">
        <id>Q9H4D5</id>
    </interactant>
    <interactant intactId="EBI-2902468">
        <id>P12757</id>
        <label>SKIL</label>
    </interactant>
    <organismsDiffer>false</organismsDiffer>
    <experiments>3</experiments>
</comment>
<comment type="subcellular location">
    <subcellularLocation>
        <location>Nucleus</location>
    </subcellularLocation>
    <subcellularLocation>
        <location>Cytoplasm</location>
    </subcellularLocation>
    <text>Shuttles between the nucleus and the cytoplasm.</text>
</comment>
<comment type="alternative products">
    <event type="alternative splicing"/>
    <isoform>
        <id>Q9H4D5-1</id>
        <name>1</name>
        <sequence type="displayed"/>
    </isoform>
    <isoform>
        <id>Q9H4D5-2</id>
        <name>2</name>
        <sequence type="described" ref="VSP_057068 VSP_057069 VSP_057070"/>
    </isoform>
</comment>
<comment type="tissue specificity">
    <text>Expressed at high level in testis and at low level in a small number of tissues.</text>
</comment>
<comment type="domain">
    <text>Lacks C-terminal domain that mediates direct interactions with nucleoporins.</text>
</comment>
<comment type="domain">
    <text>Contains a novel CRM1-dependent nuclear export signal that compensates in cis for the loss of the nuclear pore targeting domain.</text>
</comment>
<comment type="domain">
    <text>The RNA-binding domain is a non-canonical RNP-type domain.</text>
</comment>
<comment type="similarity">
    <text evidence="5">Belongs to the NXF family.</text>
</comment>
<comment type="sequence caution" evidence="5">
    <conflict type="frameshift">
        <sequence resource="EMBL-CDS" id="CAC20434"/>
    </conflict>
</comment>
<keyword id="KW-0025">Alternative splicing</keyword>
<keyword id="KW-0963">Cytoplasm</keyword>
<keyword id="KW-0509">mRNA transport</keyword>
<keyword id="KW-0539">Nucleus</keyword>
<keyword id="KW-1267">Proteomics identification</keyword>
<keyword id="KW-1185">Reference proteome</keyword>
<keyword id="KW-0694">RNA-binding</keyword>
<keyword id="KW-0813">Transport</keyword>
<protein>
    <recommendedName>
        <fullName>Nuclear RNA export factor 3</fullName>
    </recommendedName>
    <alternativeName>
        <fullName>TAP-like protein 3</fullName>
        <shortName>TAPL-3</shortName>
    </alternativeName>
</protein>
<reference key="1">
    <citation type="journal article" date="2000" name="Mol. Cell. Biol.">
        <title>TAP (NXF1) belongs to a multigene family of putative RNA export factors with a conserved modular architecture.</title>
        <authorList>
            <person name="Herold A."/>
            <person name="Suyama M."/>
            <person name="Rodrigues J.P."/>
            <person name="Braun I.C."/>
            <person name="Kutay U."/>
            <person name="Carmo-Fonseca M."/>
            <person name="Bork P."/>
            <person name="Izaurralde E."/>
        </authorList>
    </citation>
    <scope>NUCLEOTIDE SEQUENCE [MRNA] (ISOFORM 1)</scope>
    <source>
        <tissue>Testis</tissue>
    </source>
</reference>
<reference key="2">
    <citation type="journal article" date="2001" name="Mol. Cell">
        <title>Two closely related human nuclear export factors utilize entirely distinct export pathways.</title>
        <authorList>
            <person name="Yang J."/>
            <person name="Bogerd H.P."/>
            <person name="Wang P.J."/>
            <person name="Page D.C."/>
            <person name="Cullen B.R."/>
        </authorList>
    </citation>
    <scope>NUCLEOTIDE SEQUENCE [MRNA] (ISOFORM 1)</scope>
    <scope>MUTAGENESIS</scope>
    <source>
        <tissue>Testis</tissue>
    </source>
</reference>
<reference key="3">
    <citation type="journal article" date="2004" name="Nat. Genet.">
        <title>Complete sequencing and characterization of 21,243 full-length human cDNAs.</title>
        <authorList>
            <person name="Ota T."/>
            <person name="Suzuki Y."/>
            <person name="Nishikawa T."/>
            <person name="Otsuki T."/>
            <person name="Sugiyama T."/>
            <person name="Irie R."/>
            <person name="Wakamatsu A."/>
            <person name="Hayashi K."/>
            <person name="Sato H."/>
            <person name="Nagai K."/>
            <person name="Kimura K."/>
            <person name="Makita H."/>
            <person name="Sekine M."/>
            <person name="Obayashi M."/>
            <person name="Nishi T."/>
            <person name="Shibahara T."/>
            <person name="Tanaka T."/>
            <person name="Ishii S."/>
            <person name="Yamamoto J."/>
            <person name="Saito K."/>
            <person name="Kawai Y."/>
            <person name="Isono Y."/>
            <person name="Nakamura Y."/>
            <person name="Nagahari K."/>
            <person name="Murakami K."/>
            <person name="Yasuda T."/>
            <person name="Iwayanagi T."/>
            <person name="Wagatsuma M."/>
            <person name="Shiratori A."/>
            <person name="Sudo H."/>
            <person name="Hosoiri T."/>
            <person name="Kaku Y."/>
            <person name="Kodaira H."/>
            <person name="Kondo H."/>
            <person name="Sugawara M."/>
            <person name="Takahashi M."/>
            <person name="Kanda K."/>
            <person name="Yokoi T."/>
            <person name="Furuya T."/>
            <person name="Kikkawa E."/>
            <person name="Omura Y."/>
            <person name="Abe K."/>
            <person name="Kamihara K."/>
            <person name="Katsuta N."/>
            <person name="Sato K."/>
            <person name="Tanikawa M."/>
            <person name="Yamazaki M."/>
            <person name="Ninomiya K."/>
            <person name="Ishibashi T."/>
            <person name="Yamashita H."/>
            <person name="Murakawa K."/>
            <person name="Fujimori K."/>
            <person name="Tanai H."/>
            <person name="Kimata M."/>
            <person name="Watanabe M."/>
            <person name="Hiraoka S."/>
            <person name="Chiba Y."/>
            <person name="Ishida S."/>
            <person name="Ono Y."/>
            <person name="Takiguchi S."/>
            <person name="Watanabe S."/>
            <person name="Yosida M."/>
            <person name="Hotuta T."/>
            <person name="Kusano J."/>
            <person name="Kanehori K."/>
            <person name="Takahashi-Fujii A."/>
            <person name="Hara H."/>
            <person name="Tanase T.-O."/>
            <person name="Nomura Y."/>
            <person name="Togiya S."/>
            <person name="Komai F."/>
            <person name="Hara R."/>
            <person name="Takeuchi K."/>
            <person name="Arita M."/>
            <person name="Imose N."/>
            <person name="Musashino K."/>
            <person name="Yuuki H."/>
            <person name="Oshima A."/>
            <person name="Sasaki N."/>
            <person name="Aotsuka S."/>
            <person name="Yoshikawa Y."/>
            <person name="Matsunawa H."/>
            <person name="Ichihara T."/>
            <person name="Shiohata N."/>
            <person name="Sano S."/>
            <person name="Moriya S."/>
            <person name="Momiyama H."/>
            <person name="Satoh N."/>
            <person name="Takami S."/>
            <person name="Terashima Y."/>
            <person name="Suzuki O."/>
            <person name="Nakagawa S."/>
            <person name="Senoh A."/>
            <person name="Mizoguchi H."/>
            <person name="Goto Y."/>
            <person name="Shimizu F."/>
            <person name="Wakebe H."/>
            <person name="Hishigaki H."/>
            <person name="Watanabe T."/>
            <person name="Sugiyama A."/>
            <person name="Takemoto M."/>
            <person name="Kawakami B."/>
            <person name="Yamazaki M."/>
            <person name="Watanabe K."/>
            <person name="Kumagai A."/>
            <person name="Itakura S."/>
            <person name="Fukuzumi Y."/>
            <person name="Fujimori Y."/>
            <person name="Komiyama M."/>
            <person name="Tashiro H."/>
            <person name="Tanigami A."/>
            <person name="Fujiwara T."/>
            <person name="Ono T."/>
            <person name="Yamada K."/>
            <person name="Fujii Y."/>
            <person name="Ozaki K."/>
            <person name="Hirao M."/>
            <person name="Ohmori Y."/>
            <person name="Kawabata A."/>
            <person name="Hikiji T."/>
            <person name="Kobatake N."/>
            <person name="Inagaki H."/>
            <person name="Ikema Y."/>
            <person name="Okamoto S."/>
            <person name="Okitani R."/>
            <person name="Kawakami T."/>
            <person name="Noguchi S."/>
            <person name="Itoh T."/>
            <person name="Shigeta K."/>
            <person name="Senba T."/>
            <person name="Matsumura K."/>
            <person name="Nakajima Y."/>
            <person name="Mizuno T."/>
            <person name="Morinaga M."/>
            <person name="Sasaki M."/>
            <person name="Togashi T."/>
            <person name="Oyama M."/>
            <person name="Hata H."/>
            <person name="Watanabe M."/>
            <person name="Komatsu T."/>
            <person name="Mizushima-Sugano J."/>
            <person name="Satoh T."/>
            <person name="Shirai Y."/>
            <person name="Takahashi Y."/>
            <person name="Nakagawa K."/>
            <person name="Okumura K."/>
            <person name="Nagase T."/>
            <person name="Nomura N."/>
            <person name="Kikuchi H."/>
            <person name="Masuho Y."/>
            <person name="Yamashita R."/>
            <person name="Nakai K."/>
            <person name="Yada T."/>
            <person name="Nakamura Y."/>
            <person name="Ohara O."/>
            <person name="Isogai T."/>
            <person name="Sugano S."/>
        </authorList>
    </citation>
    <scope>NUCLEOTIDE SEQUENCE [LARGE SCALE MRNA] (ISOFORM 2)</scope>
    <source>
        <tissue>Testis</tissue>
    </source>
</reference>
<reference key="4">
    <citation type="journal article" date="2005" name="Nature">
        <title>The DNA sequence of the human X chromosome.</title>
        <authorList>
            <person name="Ross M.T."/>
            <person name="Grafham D.V."/>
            <person name="Coffey A.J."/>
            <person name="Scherer S."/>
            <person name="McLay K."/>
            <person name="Muzny D."/>
            <person name="Platzer M."/>
            <person name="Howell G.R."/>
            <person name="Burrows C."/>
            <person name="Bird C.P."/>
            <person name="Frankish A."/>
            <person name="Lovell F.L."/>
            <person name="Howe K.L."/>
            <person name="Ashurst J.L."/>
            <person name="Fulton R.S."/>
            <person name="Sudbrak R."/>
            <person name="Wen G."/>
            <person name="Jones M.C."/>
            <person name="Hurles M.E."/>
            <person name="Andrews T.D."/>
            <person name="Scott C.E."/>
            <person name="Searle S."/>
            <person name="Ramser J."/>
            <person name="Whittaker A."/>
            <person name="Deadman R."/>
            <person name="Carter N.P."/>
            <person name="Hunt S.E."/>
            <person name="Chen R."/>
            <person name="Cree A."/>
            <person name="Gunaratne P."/>
            <person name="Havlak P."/>
            <person name="Hodgson A."/>
            <person name="Metzker M.L."/>
            <person name="Richards S."/>
            <person name="Scott G."/>
            <person name="Steffen D."/>
            <person name="Sodergren E."/>
            <person name="Wheeler D.A."/>
            <person name="Worley K.C."/>
            <person name="Ainscough R."/>
            <person name="Ambrose K.D."/>
            <person name="Ansari-Lari M.A."/>
            <person name="Aradhya S."/>
            <person name="Ashwell R.I."/>
            <person name="Babbage A.K."/>
            <person name="Bagguley C.L."/>
            <person name="Ballabio A."/>
            <person name="Banerjee R."/>
            <person name="Barker G.E."/>
            <person name="Barlow K.F."/>
            <person name="Barrett I.P."/>
            <person name="Bates K.N."/>
            <person name="Beare D.M."/>
            <person name="Beasley H."/>
            <person name="Beasley O."/>
            <person name="Beck A."/>
            <person name="Bethel G."/>
            <person name="Blechschmidt K."/>
            <person name="Brady N."/>
            <person name="Bray-Allen S."/>
            <person name="Bridgeman A.M."/>
            <person name="Brown A.J."/>
            <person name="Brown M.J."/>
            <person name="Bonnin D."/>
            <person name="Bruford E.A."/>
            <person name="Buhay C."/>
            <person name="Burch P."/>
            <person name="Burford D."/>
            <person name="Burgess J."/>
            <person name="Burrill W."/>
            <person name="Burton J."/>
            <person name="Bye J.M."/>
            <person name="Carder C."/>
            <person name="Carrel L."/>
            <person name="Chako J."/>
            <person name="Chapman J.C."/>
            <person name="Chavez D."/>
            <person name="Chen E."/>
            <person name="Chen G."/>
            <person name="Chen Y."/>
            <person name="Chen Z."/>
            <person name="Chinault C."/>
            <person name="Ciccodicola A."/>
            <person name="Clark S.Y."/>
            <person name="Clarke G."/>
            <person name="Clee C.M."/>
            <person name="Clegg S."/>
            <person name="Clerc-Blankenburg K."/>
            <person name="Clifford K."/>
            <person name="Cobley V."/>
            <person name="Cole C.G."/>
            <person name="Conquer J.S."/>
            <person name="Corby N."/>
            <person name="Connor R.E."/>
            <person name="David R."/>
            <person name="Davies J."/>
            <person name="Davis C."/>
            <person name="Davis J."/>
            <person name="Delgado O."/>
            <person name="Deshazo D."/>
            <person name="Dhami P."/>
            <person name="Ding Y."/>
            <person name="Dinh H."/>
            <person name="Dodsworth S."/>
            <person name="Draper H."/>
            <person name="Dugan-Rocha S."/>
            <person name="Dunham A."/>
            <person name="Dunn M."/>
            <person name="Durbin K.J."/>
            <person name="Dutta I."/>
            <person name="Eades T."/>
            <person name="Ellwood M."/>
            <person name="Emery-Cohen A."/>
            <person name="Errington H."/>
            <person name="Evans K.L."/>
            <person name="Faulkner L."/>
            <person name="Francis F."/>
            <person name="Frankland J."/>
            <person name="Fraser A.E."/>
            <person name="Galgoczy P."/>
            <person name="Gilbert J."/>
            <person name="Gill R."/>
            <person name="Gloeckner G."/>
            <person name="Gregory S.G."/>
            <person name="Gribble S."/>
            <person name="Griffiths C."/>
            <person name="Grocock R."/>
            <person name="Gu Y."/>
            <person name="Gwilliam R."/>
            <person name="Hamilton C."/>
            <person name="Hart E.A."/>
            <person name="Hawes A."/>
            <person name="Heath P.D."/>
            <person name="Heitmann K."/>
            <person name="Hennig S."/>
            <person name="Hernandez J."/>
            <person name="Hinzmann B."/>
            <person name="Ho S."/>
            <person name="Hoffs M."/>
            <person name="Howden P.J."/>
            <person name="Huckle E.J."/>
            <person name="Hume J."/>
            <person name="Hunt P.J."/>
            <person name="Hunt A.R."/>
            <person name="Isherwood J."/>
            <person name="Jacob L."/>
            <person name="Johnson D."/>
            <person name="Jones S."/>
            <person name="de Jong P.J."/>
            <person name="Joseph S.S."/>
            <person name="Keenan S."/>
            <person name="Kelly S."/>
            <person name="Kershaw J.K."/>
            <person name="Khan Z."/>
            <person name="Kioschis P."/>
            <person name="Klages S."/>
            <person name="Knights A.J."/>
            <person name="Kosiura A."/>
            <person name="Kovar-Smith C."/>
            <person name="Laird G.K."/>
            <person name="Langford C."/>
            <person name="Lawlor S."/>
            <person name="Leversha M."/>
            <person name="Lewis L."/>
            <person name="Liu W."/>
            <person name="Lloyd C."/>
            <person name="Lloyd D.M."/>
            <person name="Loulseged H."/>
            <person name="Loveland J.E."/>
            <person name="Lovell J.D."/>
            <person name="Lozado R."/>
            <person name="Lu J."/>
            <person name="Lyne R."/>
            <person name="Ma J."/>
            <person name="Maheshwari M."/>
            <person name="Matthews L.H."/>
            <person name="McDowall J."/>
            <person name="McLaren S."/>
            <person name="McMurray A."/>
            <person name="Meidl P."/>
            <person name="Meitinger T."/>
            <person name="Milne S."/>
            <person name="Miner G."/>
            <person name="Mistry S.L."/>
            <person name="Morgan M."/>
            <person name="Morris S."/>
            <person name="Mueller I."/>
            <person name="Mullikin J.C."/>
            <person name="Nguyen N."/>
            <person name="Nordsiek G."/>
            <person name="Nyakatura G."/>
            <person name="O'dell C.N."/>
            <person name="Okwuonu G."/>
            <person name="Palmer S."/>
            <person name="Pandian R."/>
            <person name="Parker D."/>
            <person name="Parrish J."/>
            <person name="Pasternak S."/>
            <person name="Patel D."/>
            <person name="Pearce A.V."/>
            <person name="Pearson D.M."/>
            <person name="Pelan S.E."/>
            <person name="Perez L."/>
            <person name="Porter K.M."/>
            <person name="Ramsey Y."/>
            <person name="Reichwald K."/>
            <person name="Rhodes S."/>
            <person name="Ridler K.A."/>
            <person name="Schlessinger D."/>
            <person name="Schueler M.G."/>
            <person name="Sehra H.K."/>
            <person name="Shaw-Smith C."/>
            <person name="Shen H."/>
            <person name="Sheridan E.M."/>
            <person name="Shownkeen R."/>
            <person name="Skuce C.D."/>
            <person name="Smith M.L."/>
            <person name="Sotheran E.C."/>
            <person name="Steingruber H.E."/>
            <person name="Steward C.A."/>
            <person name="Storey R."/>
            <person name="Swann R.M."/>
            <person name="Swarbreck D."/>
            <person name="Tabor P.E."/>
            <person name="Taudien S."/>
            <person name="Taylor T."/>
            <person name="Teague B."/>
            <person name="Thomas K."/>
            <person name="Thorpe A."/>
            <person name="Timms K."/>
            <person name="Tracey A."/>
            <person name="Trevanion S."/>
            <person name="Tromans A.C."/>
            <person name="d'Urso M."/>
            <person name="Verduzco D."/>
            <person name="Villasana D."/>
            <person name="Waldron L."/>
            <person name="Wall M."/>
            <person name="Wang Q."/>
            <person name="Warren J."/>
            <person name="Warry G.L."/>
            <person name="Wei X."/>
            <person name="West A."/>
            <person name="Whitehead S.L."/>
            <person name="Whiteley M.N."/>
            <person name="Wilkinson J.E."/>
            <person name="Willey D.L."/>
            <person name="Williams G."/>
            <person name="Williams L."/>
            <person name="Williamson A."/>
            <person name="Williamson H."/>
            <person name="Wilming L."/>
            <person name="Woodmansey R.L."/>
            <person name="Wray P.W."/>
            <person name="Yen J."/>
            <person name="Zhang J."/>
            <person name="Zhou J."/>
            <person name="Zoghbi H."/>
            <person name="Zorilla S."/>
            <person name="Buck D."/>
            <person name="Reinhardt R."/>
            <person name="Poustka A."/>
            <person name="Rosenthal A."/>
            <person name="Lehrach H."/>
            <person name="Meindl A."/>
            <person name="Minx P.J."/>
            <person name="Hillier L.W."/>
            <person name="Willard H.F."/>
            <person name="Wilson R.K."/>
            <person name="Waterston R.H."/>
            <person name="Rice C.M."/>
            <person name="Vaudin M."/>
            <person name="Coulson A."/>
            <person name="Nelson D.L."/>
            <person name="Weinstock G."/>
            <person name="Sulston J.E."/>
            <person name="Durbin R.M."/>
            <person name="Hubbard T."/>
            <person name="Gibbs R.A."/>
            <person name="Beck S."/>
            <person name="Rogers J."/>
            <person name="Bentley D.R."/>
        </authorList>
    </citation>
    <scope>NUCLEOTIDE SEQUENCE [LARGE SCALE GENOMIC DNA]</scope>
</reference>
<reference key="5">
    <citation type="submission" date="2005-09" db="EMBL/GenBank/DDBJ databases">
        <authorList>
            <person name="Mural R.J."/>
            <person name="Istrail S."/>
            <person name="Sutton G.G."/>
            <person name="Florea L."/>
            <person name="Halpern A.L."/>
            <person name="Mobarry C.M."/>
            <person name="Lippert R."/>
            <person name="Walenz B."/>
            <person name="Shatkay H."/>
            <person name="Dew I."/>
            <person name="Miller J.R."/>
            <person name="Flanigan M.J."/>
            <person name="Edwards N.J."/>
            <person name="Bolanos R."/>
            <person name="Fasulo D."/>
            <person name="Halldorsson B.V."/>
            <person name="Hannenhalli S."/>
            <person name="Turner R."/>
            <person name="Yooseph S."/>
            <person name="Lu F."/>
            <person name="Nusskern D.R."/>
            <person name="Shue B.C."/>
            <person name="Zheng X.H."/>
            <person name="Zhong F."/>
            <person name="Delcher A.L."/>
            <person name="Huson D.H."/>
            <person name="Kravitz S.A."/>
            <person name="Mouchard L."/>
            <person name="Reinert K."/>
            <person name="Remington K.A."/>
            <person name="Clark A.G."/>
            <person name="Waterman M.S."/>
            <person name="Eichler E.E."/>
            <person name="Adams M.D."/>
            <person name="Hunkapiller M.W."/>
            <person name="Myers E.W."/>
            <person name="Venter J.C."/>
        </authorList>
    </citation>
    <scope>NUCLEOTIDE SEQUENCE [LARGE SCALE GENOMIC DNA]</scope>
</reference>
<reference key="6">
    <citation type="journal article" date="2004" name="Genome Res.">
        <title>The status, quality, and expansion of the NIH full-length cDNA project: the Mammalian Gene Collection (MGC).</title>
        <authorList>
            <consortium name="The MGC Project Team"/>
        </authorList>
    </citation>
    <scope>NUCLEOTIDE SEQUENCE [LARGE SCALE MRNA] (ISOFORM 1)</scope>
    <source>
        <tissue>Brain</tissue>
    </source>
</reference>
<reference key="7">
    <citation type="journal article" date="2001" name="Curr. Biol.">
        <title>NXF5, a novel member of the nuclear RNA export factor family, is lost in a male patient with a syndromic form of mental retardation.</title>
        <authorList>
            <person name="Jun L."/>
            <person name="Frints S."/>
            <person name="Duhamel H."/>
            <person name="Herold A."/>
            <person name="Abad-Rodrigues J."/>
            <person name="Dotti C."/>
            <person name="Izaurralde E."/>
            <person name="Marynen P."/>
            <person name="Froyen G."/>
        </authorList>
    </citation>
    <scope>NUCLEOTIDE SEQUENCE [MRNA] OF 125-531 (ISOFORM 1)</scope>
    <source>
        <tissue>Fetal brain</tissue>
    </source>
</reference>
<gene>
    <name type="primary">NXF3</name>
    <name type="synonym">TAPL3</name>
</gene>
<name>NXF3_HUMAN</name>
<accession>Q9H4D5</accession>
<accession>B4DYS7</accession>
<accession>Q5H9I1</accession>
<accession>Q9H1A9</accession>
<evidence type="ECO:0000255" key="1">
    <source>
        <dbReference type="PROSITE-ProRule" id="PRU00137"/>
    </source>
</evidence>
<evidence type="ECO:0000256" key="2">
    <source>
        <dbReference type="SAM" id="MobiDB-lite"/>
    </source>
</evidence>
<evidence type="ECO:0000269" key="3">
    <source>
    </source>
</evidence>
<evidence type="ECO:0000303" key="4">
    <source>
    </source>
</evidence>
<evidence type="ECO:0000305" key="5"/>